<proteinExistence type="evidence at transcript level"/>
<evidence type="ECO:0000250" key="1"/>
<evidence type="ECO:0000255" key="2">
    <source>
        <dbReference type="PROSITE-ProRule" id="PRU01082"/>
    </source>
</evidence>
<evidence type="ECO:0000305" key="3"/>
<name>P2C78_ORYSJ</name>
<protein>
    <recommendedName>
        <fullName>Probable protein phosphatase 2C 78</fullName>
        <shortName>OsPP2C78</shortName>
        <ecNumber>3.1.3.16</ecNumber>
    </recommendedName>
</protein>
<accession>Q2QN36</accession>
<accession>A0A0P0YBW8</accession>
<sequence>MLLRWLARPAERCLGRGGGGGGGGGGDGLLWHAELKPHASGEYSIAVAQANAELEDQGQVVTSPAATFVGVYDGHGGPEASRFISSRLFPHLHRFASEQGGMSTDAIKRAFHATEEEFLHMVKRSWLKQPQIASVGSCCLVGAITDNVLYVANLGDSRAVLGRRGPDGREVVAERLSNDHNVAEEEVRKELTEQHPDDSRIVIYTRGVWRIKGIIQVSRSIGDVYLKKPEFARDPIFRQYVCSIPLKRPVMTAEPSIKEHQLRQQDLFLIFASDGLWEQLTDKAAVDIVFKNPRAGIAKRLVRAALTEAARKREMRYTDIKHIERGSRRNFHDDITVVVVYLDHHKHGVRPNLGNRNSFRFTNAPVDIFSGSSEEVDHHPLRLNLAMDGAVG</sequence>
<organism>
    <name type="scientific">Oryza sativa subsp. japonica</name>
    <name type="common">Rice</name>
    <dbReference type="NCBI Taxonomy" id="39947"/>
    <lineage>
        <taxon>Eukaryota</taxon>
        <taxon>Viridiplantae</taxon>
        <taxon>Streptophyta</taxon>
        <taxon>Embryophyta</taxon>
        <taxon>Tracheophyta</taxon>
        <taxon>Spermatophyta</taxon>
        <taxon>Magnoliopsida</taxon>
        <taxon>Liliopsida</taxon>
        <taxon>Poales</taxon>
        <taxon>Poaceae</taxon>
        <taxon>BOP clade</taxon>
        <taxon>Oryzoideae</taxon>
        <taxon>Oryzeae</taxon>
        <taxon>Oryzinae</taxon>
        <taxon>Oryza</taxon>
        <taxon>Oryza sativa</taxon>
    </lineage>
</organism>
<gene>
    <name type="ordered locus">Os12g0580900</name>
    <name type="ordered locus">LOC_Os12g39120</name>
</gene>
<feature type="chain" id="PRO_0000363325" description="Probable protein phosphatase 2C 78">
    <location>
        <begin position="1"/>
        <end position="392"/>
    </location>
</feature>
<feature type="domain" description="PPM-type phosphatase" evidence="2">
    <location>
        <begin position="39"/>
        <end position="342"/>
    </location>
</feature>
<feature type="binding site" evidence="1">
    <location>
        <position position="73"/>
    </location>
    <ligand>
        <name>Mn(2+)</name>
        <dbReference type="ChEBI" id="CHEBI:29035"/>
        <label>1</label>
    </ligand>
</feature>
<feature type="binding site" evidence="1">
    <location>
        <position position="73"/>
    </location>
    <ligand>
        <name>Mn(2+)</name>
        <dbReference type="ChEBI" id="CHEBI:29035"/>
        <label>2</label>
    </ligand>
</feature>
<feature type="binding site" evidence="1">
    <location>
        <position position="74"/>
    </location>
    <ligand>
        <name>Mn(2+)</name>
        <dbReference type="ChEBI" id="CHEBI:29035"/>
        <label>1</label>
    </ligand>
</feature>
<feature type="binding site" evidence="1">
    <location>
        <position position="274"/>
    </location>
    <ligand>
        <name>Mn(2+)</name>
        <dbReference type="ChEBI" id="CHEBI:29035"/>
        <label>2</label>
    </ligand>
</feature>
<feature type="binding site" evidence="1">
    <location>
        <position position="333"/>
    </location>
    <ligand>
        <name>Mn(2+)</name>
        <dbReference type="ChEBI" id="CHEBI:29035"/>
        <label>2</label>
    </ligand>
</feature>
<comment type="catalytic activity">
    <reaction>
        <text>O-phospho-L-seryl-[protein] + H2O = L-seryl-[protein] + phosphate</text>
        <dbReference type="Rhea" id="RHEA:20629"/>
        <dbReference type="Rhea" id="RHEA-COMP:9863"/>
        <dbReference type="Rhea" id="RHEA-COMP:11604"/>
        <dbReference type="ChEBI" id="CHEBI:15377"/>
        <dbReference type="ChEBI" id="CHEBI:29999"/>
        <dbReference type="ChEBI" id="CHEBI:43474"/>
        <dbReference type="ChEBI" id="CHEBI:83421"/>
        <dbReference type="EC" id="3.1.3.16"/>
    </reaction>
</comment>
<comment type="catalytic activity">
    <reaction>
        <text>O-phospho-L-threonyl-[protein] + H2O = L-threonyl-[protein] + phosphate</text>
        <dbReference type="Rhea" id="RHEA:47004"/>
        <dbReference type="Rhea" id="RHEA-COMP:11060"/>
        <dbReference type="Rhea" id="RHEA-COMP:11605"/>
        <dbReference type="ChEBI" id="CHEBI:15377"/>
        <dbReference type="ChEBI" id="CHEBI:30013"/>
        <dbReference type="ChEBI" id="CHEBI:43474"/>
        <dbReference type="ChEBI" id="CHEBI:61977"/>
        <dbReference type="EC" id="3.1.3.16"/>
    </reaction>
</comment>
<comment type="cofactor">
    <cofactor evidence="1">
        <name>Mg(2+)</name>
        <dbReference type="ChEBI" id="CHEBI:18420"/>
    </cofactor>
    <cofactor evidence="1">
        <name>Mn(2+)</name>
        <dbReference type="ChEBI" id="CHEBI:29035"/>
    </cofactor>
    <text evidence="1">Binds 2 magnesium or manganese ions per subunit.</text>
</comment>
<comment type="similarity">
    <text evidence="3">Belongs to the PP2C family.</text>
</comment>
<dbReference type="EC" id="3.1.3.16"/>
<dbReference type="EMBL" id="DP000011">
    <property type="protein sequence ID" value="ABA99127.1"/>
    <property type="molecule type" value="Genomic_DNA"/>
</dbReference>
<dbReference type="EMBL" id="AP008218">
    <property type="protein sequence ID" value="BAF30152.1"/>
    <property type="molecule type" value="Genomic_DNA"/>
</dbReference>
<dbReference type="EMBL" id="AP014968">
    <property type="protein sequence ID" value="BAT17814.1"/>
    <property type="molecule type" value="Genomic_DNA"/>
</dbReference>
<dbReference type="EMBL" id="AK071206">
    <property type="protein sequence ID" value="BAG92373.1"/>
    <property type="molecule type" value="mRNA"/>
</dbReference>
<dbReference type="RefSeq" id="XP_015618686.1">
    <property type="nucleotide sequence ID" value="XM_015763200.1"/>
</dbReference>
<dbReference type="SMR" id="Q2QN36"/>
<dbReference type="FunCoup" id="Q2QN36">
    <property type="interactions" value="1759"/>
</dbReference>
<dbReference type="STRING" id="39947.Q2QN36"/>
<dbReference type="PaxDb" id="39947-Q2QN36"/>
<dbReference type="EnsemblPlants" id="Os12t0580900-01">
    <property type="protein sequence ID" value="Os12t0580900-01"/>
    <property type="gene ID" value="Os12g0580900"/>
</dbReference>
<dbReference type="Gramene" id="Os12t0580900-01">
    <property type="protein sequence ID" value="Os12t0580900-01"/>
    <property type="gene ID" value="Os12g0580900"/>
</dbReference>
<dbReference type="KEGG" id="dosa:Os12g0580900"/>
<dbReference type="eggNOG" id="KOG0700">
    <property type="taxonomic scope" value="Eukaryota"/>
</dbReference>
<dbReference type="HOGENOM" id="CLU_013173_2_2_1"/>
<dbReference type="InParanoid" id="Q2QN36"/>
<dbReference type="OMA" id="DCCFRRR"/>
<dbReference type="OrthoDB" id="420076at2759"/>
<dbReference type="Proteomes" id="UP000000763">
    <property type="component" value="Chromosome 12"/>
</dbReference>
<dbReference type="Proteomes" id="UP000059680">
    <property type="component" value="Chromosome 12"/>
</dbReference>
<dbReference type="GO" id="GO:0046872">
    <property type="term" value="F:metal ion binding"/>
    <property type="evidence" value="ECO:0007669"/>
    <property type="project" value="UniProtKB-KW"/>
</dbReference>
<dbReference type="GO" id="GO:0004722">
    <property type="term" value="F:protein serine/threonine phosphatase activity"/>
    <property type="evidence" value="ECO:0000318"/>
    <property type="project" value="GO_Central"/>
</dbReference>
<dbReference type="GO" id="GO:1902531">
    <property type="term" value="P:regulation of intracellular signal transduction"/>
    <property type="evidence" value="ECO:0000318"/>
    <property type="project" value="GO_Central"/>
</dbReference>
<dbReference type="CDD" id="cd00143">
    <property type="entry name" value="PP2Cc"/>
    <property type="match status" value="1"/>
</dbReference>
<dbReference type="FunFam" id="3.60.40.10:FF:000020">
    <property type="entry name" value="Probable protein phosphatase 2C 42"/>
    <property type="match status" value="1"/>
</dbReference>
<dbReference type="Gene3D" id="3.60.40.10">
    <property type="entry name" value="PPM-type phosphatase domain"/>
    <property type="match status" value="1"/>
</dbReference>
<dbReference type="InterPro" id="IPR015655">
    <property type="entry name" value="PP2C"/>
</dbReference>
<dbReference type="InterPro" id="IPR000222">
    <property type="entry name" value="PP2C_BS"/>
</dbReference>
<dbReference type="InterPro" id="IPR036457">
    <property type="entry name" value="PPM-type-like_dom_sf"/>
</dbReference>
<dbReference type="InterPro" id="IPR001932">
    <property type="entry name" value="PPM-type_phosphatase-like_dom"/>
</dbReference>
<dbReference type="PANTHER" id="PTHR47992">
    <property type="entry name" value="PROTEIN PHOSPHATASE"/>
    <property type="match status" value="1"/>
</dbReference>
<dbReference type="Pfam" id="PF00481">
    <property type="entry name" value="PP2C"/>
    <property type="match status" value="1"/>
</dbReference>
<dbReference type="SMART" id="SM00331">
    <property type="entry name" value="PP2C_SIG"/>
    <property type="match status" value="1"/>
</dbReference>
<dbReference type="SMART" id="SM00332">
    <property type="entry name" value="PP2Cc"/>
    <property type="match status" value="1"/>
</dbReference>
<dbReference type="SUPFAM" id="SSF81606">
    <property type="entry name" value="PP2C-like"/>
    <property type="match status" value="1"/>
</dbReference>
<dbReference type="PROSITE" id="PS01032">
    <property type="entry name" value="PPM_1"/>
    <property type="match status" value="1"/>
</dbReference>
<dbReference type="PROSITE" id="PS51746">
    <property type="entry name" value="PPM_2"/>
    <property type="match status" value="1"/>
</dbReference>
<reference key="1">
    <citation type="journal article" date="2005" name="BMC Biol.">
        <title>The sequence of rice chromosomes 11 and 12, rich in disease resistance genes and recent gene duplications.</title>
        <authorList>
            <consortium name="The rice chromosomes 11 and 12 sequencing consortia"/>
        </authorList>
    </citation>
    <scope>NUCLEOTIDE SEQUENCE [LARGE SCALE GENOMIC DNA]</scope>
    <source>
        <strain>cv. Nipponbare</strain>
    </source>
</reference>
<reference key="2">
    <citation type="journal article" date="2005" name="Nature">
        <title>The map-based sequence of the rice genome.</title>
        <authorList>
            <consortium name="International rice genome sequencing project (IRGSP)"/>
        </authorList>
    </citation>
    <scope>NUCLEOTIDE SEQUENCE [LARGE SCALE GENOMIC DNA]</scope>
    <source>
        <strain>cv. Nipponbare</strain>
    </source>
</reference>
<reference key="3">
    <citation type="journal article" date="2008" name="Nucleic Acids Res.">
        <title>The rice annotation project database (RAP-DB): 2008 update.</title>
        <authorList>
            <consortium name="The rice annotation project (RAP)"/>
        </authorList>
    </citation>
    <scope>GENOME REANNOTATION</scope>
    <source>
        <strain>cv. Nipponbare</strain>
    </source>
</reference>
<reference key="4">
    <citation type="journal article" date="2013" name="Rice">
        <title>Improvement of the Oryza sativa Nipponbare reference genome using next generation sequence and optical map data.</title>
        <authorList>
            <person name="Kawahara Y."/>
            <person name="de la Bastide M."/>
            <person name="Hamilton J.P."/>
            <person name="Kanamori H."/>
            <person name="McCombie W.R."/>
            <person name="Ouyang S."/>
            <person name="Schwartz D.C."/>
            <person name="Tanaka T."/>
            <person name="Wu J."/>
            <person name="Zhou S."/>
            <person name="Childs K.L."/>
            <person name="Davidson R.M."/>
            <person name="Lin H."/>
            <person name="Quesada-Ocampo L."/>
            <person name="Vaillancourt B."/>
            <person name="Sakai H."/>
            <person name="Lee S.S."/>
            <person name="Kim J."/>
            <person name="Numa H."/>
            <person name="Itoh T."/>
            <person name="Buell C.R."/>
            <person name="Matsumoto T."/>
        </authorList>
    </citation>
    <scope>GENOME REANNOTATION</scope>
    <source>
        <strain>cv. Nipponbare</strain>
    </source>
</reference>
<reference key="5">
    <citation type="journal article" date="2003" name="Science">
        <title>Collection, mapping, and annotation of over 28,000 cDNA clones from japonica rice.</title>
        <authorList>
            <consortium name="The rice full-length cDNA consortium"/>
        </authorList>
    </citation>
    <scope>NUCLEOTIDE SEQUENCE [LARGE SCALE MRNA]</scope>
    <source>
        <strain>cv. Nipponbare</strain>
    </source>
</reference>
<reference key="6">
    <citation type="journal article" date="2008" name="BMC Genomics">
        <title>Genome-wide and expression analysis of protein phosphatase 2C in rice and Arabidopsis.</title>
        <authorList>
            <person name="Xue T."/>
            <person name="Wang D."/>
            <person name="Zhang S."/>
            <person name="Ehlting J."/>
            <person name="Ni F."/>
            <person name="Jacab S."/>
            <person name="Zheng C."/>
            <person name="Zhong Y."/>
        </authorList>
    </citation>
    <scope>GENE FAMILY</scope>
    <scope>NOMENCLATURE</scope>
</reference>
<keyword id="KW-0378">Hydrolase</keyword>
<keyword id="KW-0460">Magnesium</keyword>
<keyword id="KW-0464">Manganese</keyword>
<keyword id="KW-0479">Metal-binding</keyword>
<keyword id="KW-0904">Protein phosphatase</keyword>
<keyword id="KW-1185">Reference proteome</keyword>